<feature type="propeptide" id="PRO_0000450702" description="Leader sequence" evidence="3 6">
    <location>
        <begin position="1"/>
        <end position="4"/>
    </location>
</feature>
<feature type="chain" id="PRO_0000450703" description="Pilin-like protein PilA2" evidence="3">
    <location>
        <begin position="5"/>
        <end position="193"/>
    </location>
</feature>
<feature type="transmembrane region" description="Helical" evidence="2">
    <location>
        <begin position="5"/>
        <end position="25"/>
    </location>
</feature>
<feature type="modified residue" description="N-methylleucine" evidence="3">
    <location>
        <position position="5"/>
    </location>
</feature>
<dbReference type="EMBL" id="AE017221">
    <property type="protein sequence ID" value="AAS81199.1"/>
    <property type="molecule type" value="Genomic_DNA"/>
</dbReference>
<dbReference type="RefSeq" id="WP_011173284.1">
    <property type="nucleotide sequence ID" value="NC_005835.1"/>
</dbReference>
<dbReference type="SMR" id="Q72JC3"/>
<dbReference type="KEGG" id="tth:TT_C0855"/>
<dbReference type="eggNOG" id="COG2165">
    <property type="taxonomic scope" value="Bacteria"/>
</dbReference>
<dbReference type="HOGENOM" id="CLU_1460655_0_0_0"/>
<dbReference type="OrthoDB" id="32002at2"/>
<dbReference type="Proteomes" id="UP000000592">
    <property type="component" value="Chromosome"/>
</dbReference>
<dbReference type="GO" id="GO:0009279">
    <property type="term" value="C:cell outer membrane"/>
    <property type="evidence" value="ECO:0007669"/>
    <property type="project" value="UniProtKB-SubCell"/>
</dbReference>
<dbReference type="GO" id="GO:0042597">
    <property type="term" value="C:periplasmic space"/>
    <property type="evidence" value="ECO:0007669"/>
    <property type="project" value="UniProtKB-SubCell"/>
</dbReference>
<dbReference type="GO" id="GO:0005886">
    <property type="term" value="C:plasma membrane"/>
    <property type="evidence" value="ECO:0007669"/>
    <property type="project" value="UniProtKB-SubCell"/>
</dbReference>
<dbReference type="InterPro" id="IPR012902">
    <property type="entry name" value="N_methyl_site"/>
</dbReference>
<dbReference type="InterPro" id="IPR045584">
    <property type="entry name" value="Pilin-like"/>
</dbReference>
<dbReference type="NCBIfam" id="TIGR02532">
    <property type="entry name" value="IV_pilin_GFxxxE"/>
    <property type="match status" value="1"/>
</dbReference>
<dbReference type="Pfam" id="PF07963">
    <property type="entry name" value="N_methyl"/>
    <property type="match status" value="1"/>
</dbReference>
<dbReference type="SUPFAM" id="SSF54523">
    <property type="entry name" value="Pili subunits"/>
    <property type="match status" value="1"/>
</dbReference>
<dbReference type="PROSITE" id="PS00409">
    <property type="entry name" value="PROKAR_NTER_METHYL"/>
    <property type="match status" value="1"/>
</dbReference>
<proteinExistence type="inferred from homology"/>
<organism>
    <name type="scientific">Thermus thermophilus (strain ATCC BAA-163 / DSM 7039 / HB27)</name>
    <dbReference type="NCBI Taxonomy" id="262724"/>
    <lineage>
        <taxon>Bacteria</taxon>
        <taxon>Thermotogati</taxon>
        <taxon>Deinococcota</taxon>
        <taxon>Deinococci</taxon>
        <taxon>Thermales</taxon>
        <taxon>Thermaceae</taxon>
        <taxon>Thermus</taxon>
    </lineage>
</organism>
<reference key="1">
    <citation type="journal article" date="2004" name="Nat. Biotechnol.">
        <title>The genome sequence of the extreme thermophile Thermus thermophilus.</title>
        <authorList>
            <person name="Henne A."/>
            <person name="Brueggemann H."/>
            <person name="Raasch C."/>
            <person name="Wiezer A."/>
            <person name="Hartsch T."/>
            <person name="Liesegang H."/>
            <person name="Johann A."/>
            <person name="Lienard T."/>
            <person name="Gohl O."/>
            <person name="Martinez-Arias R."/>
            <person name="Jacobi C."/>
            <person name="Starkuviene V."/>
            <person name="Schlenczeck S."/>
            <person name="Dencker S."/>
            <person name="Huber R."/>
            <person name="Klenk H.-P."/>
            <person name="Kramer W."/>
            <person name="Merkl R."/>
            <person name="Gottschalk G."/>
            <person name="Fritz H.-J."/>
        </authorList>
    </citation>
    <scope>NUCLEOTIDE SEQUENCE [LARGE SCALE GENOMIC DNA]</scope>
    <source>
        <strain>ATCC BAA-163 / DSM 7039 / HB27</strain>
    </source>
</reference>
<reference key="2">
    <citation type="journal article" date="2003" name="Appl. Environ. Microbiol.">
        <title>Pilin-like proteins in the extremely thermophilic bacterium Thermus thermophilus HB27: implication in competence for natural transformation and links to type IV pilus biogenesis.</title>
        <authorList>
            <person name="Friedrich A."/>
            <person name="Rumszauer J."/>
            <person name="Henne A."/>
            <person name="Averhoff B."/>
        </authorList>
    </citation>
    <scope>FUNCTION</scope>
    <scope>DISRUPTION PHENOTYPE</scope>
</reference>
<accession>Q72JC3</accession>
<keyword id="KW-0997">Cell inner membrane</keyword>
<keyword id="KW-1003">Cell membrane</keyword>
<keyword id="KW-0998">Cell outer membrane</keyword>
<keyword id="KW-0472">Membrane</keyword>
<keyword id="KW-0488">Methylation</keyword>
<keyword id="KW-0574">Periplasm</keyword>
<keyword id="KW-0812">Transmembrane</keyword>
<keyword id="KW-1133">Transmembrane helix</keyword>
<comment type="function">
    <text evidence="4">Plays an essential role in natural DNA transformation but is not required for pilus biogenesis.</text>
</comment>
<comment type="subcellular location">
    <subcellularLocation>
        <location evidence="1">Cell inner membrane</location>
        <topology evidence="2">Single-pass membrane protein</topology>
    </subcellularLocation>
    <subcellularLocation>
        <location evidence="1">Cell outer membrane</location>
        <topology evidence="2">Single-pass membrane protein</topology>
    </subcellularLocation>
    <subcellularLocation>
        <location evidence="1">Periplasm</location>
    </subcellularLocation>
    <text evidence="1">The single N-terminal transmembrane is initially involved in the correct localization to the inner membrane. Once the leader sequence cleaved, this region plays a role in multimerization and protein-protein interactions in the periplasm and the outer membrane.</text>
</comment>
<comment type="disruption phenotype">
    <text evidence="4">Mutants have a wild-type piliation phenotype but are deficient in transformation.</text>
</comment>
<sequence>MRKGLTLVEVLVTLVIMGIAFAALLTSQLANLRASAQARFATDAKAAAVQVLERRSAEVLKSEIVPALSPYKDAPLDPDNPSGNWRSFYFVDYYFSCPTRVAPSPKQRGGSVANLRPGLTCSGTETIFGIPVAWDIRGENGILGEGVVTVVVTATHPRGPKVTLGRRVTCYDVYPSPTQDQPAPCPPPGGGRP</sequence>
<protein>
    <recommendedName>
        <fullName evidence="5">Pilin-like protein PilA2</fullName>
    </recommendedName>
</protein>
<gene>
    <name type="primary">pilA2</name>
    <name type="ordered locus">TT_C0855</name>
</gene>
<name>PILA2_THET2</name>
<evidence type="ECO:0000250" key="1">
    <source>
        <dbReference type="UniProtKB" id="Q72JC0"/>
    </source>
</evidence>
<evidence type="ECO:0000255" key="2"/>
<evidence type="ECO:0000255" key="3">
    <source>
        <dbReference type="PROSITE-ProRule" id="PRU01070"/>
    </source>
</evidence>
<evidence type="ECO:0000269" key="4">
    <source>
    </source>
</evidence>
<evidence type="ECO:0000303" key="5">
    <source>
    </source>
</evidence>
<evidence type="ECO:0000305" key="6"/>